<accession>Q9LJ04</accession>
<accession>A2ZRK1</accession>
<accession>Q0JNU2</accession>
<keyword id="KW-0963">Cytoplasm</keyword>
<keyword id="KW-0539">Nucleus</keyword>
<keyword id="KW-1185">Reference proteome</keyword>
<keyword id="KW-0677">Repeat</keyword>
<keyword id="KW-0694">RNA-binding</keyword>
<dbReference type="EMBL" id="AP001080">
    <property type="protein sequence ID" value="BAA90354.1"/>
    <property type="molecule type" value="Genomic_DNA"/>
</dbReference>
<dbReference type="EMBL" id="AP008207">
    <property type="protein sequence ID" value="BAF04586.2"/>
    <property type="status" value="ALT_INIT"/>
    <property type="molecule type" value="Genomic_DNA"/>
</dbReference>
<dbReference type="EMBL" id="AP014957">
    <property type="protein sequence ID" value="BAS71462.1"/>
    <property type="molecule type" value="Genomic_DNA"/>
</dbReference>
<dbReference type="EMBL" id="CM000138">
    <property type="protein sequence ID" value="EAZ11348.1"/>
    <property type="molecule type" value="Genomic_DNA"/>
</dbReference>
<dbReference type="EMBL" id="AK099896">
    <property type="protein sequence ID" value="BAG94341.1"/>
    <property type="molecule type" value="mRNA"/>
</dbReference>
<dbReference type="EMBL" id="AK109487">
    <property type="protein sequence ID" value="BAG98769.1"/>
    <property type="molecule type" value="mRNA"/>
</dbReference>
<dbReference type="RefSeq" id="XP_015621304.1">
    <property type="nucleotide sequence ID" value="XM_015765818.1"/>
</dbReference>
<dbReference type="SMR" id="Q9LJ04"/>
<dbReference type="FunCoup" id="Q9LJ04">
    <property type="interactions" value="504"/>
</dbReference>
<dbReference type="STRING" id="39947.Q9LJ04"/>
<dbReference type="PaxDb" id="39947-Q9LJ04"/>
<dbReference type="EnsemblPlants" id="Os01t0265800-01">
    <property type="protein sequence ID" value="Os01t0265800-01"/>
    <property type="gene ID" value="Os01g0265800"/>
</dbReference>
<dbReference type="EnsemblPlants" id="Os01t0265800-02">
    <property type="protein sequence ID" value="Os01t0265800-02"/>
    <property type="gene ID" value="Os01g0265800"/>
</dbReference>
<dbReference type="Gramene" id="Os01t0265800-01">
    <property type="protein sequence ID" value="Os01t0265800-01"/>
    <property type="gene ID" value="Os01g0265800"/>
</dbReference>
<dbReference type="Gramene" id="Os01t0265800-02">
    <property type="protein sequence ID" value="Os01t0265800-02"/>
    <property type="gene ID" value="Os01g0265800"/>
</dbReference>
<dbReference type="KEGG" id="dosa:Os01g0265800"/>
<dbReference type="eggNOG" id="KOG0118">
    <property type="taxonomic scope" value="Eukaryota"/>
</dbReference>
<dbReference type="HOGENOM" id="CLU_012062_1_6_1"/>
<dbReference type="InParanoid" id="Q9LJ04"/>
<dbReference type="OMA" id="QPYITIH"/>
<dbReference type="OrthoDB" id="1875751at2759"/>
<dbReference type="Proteomes" id="UP000000763">
    <property type="component" value="Chromosome 1"/>
</dbReference>
<dbReference type="Proteomes" id="UP000007752">
    <property type="component" value="Chromosome 1"/>
</dbReference>
<dbReference type="Proteomes" id="UP000059680">
    <property type="component" value="Chromosome 1"/>
</dbReference>
<dbReference type="GO" id="GO:0005737">
    <property type="term" value="C:cytoplasm"/>
    <property type="evidence" value="ECO:0000314"/>
    <property type="project" value="UniProtKB"/>
</dbReference>
<dbReference type="GO" id="GO:0005634">
    <property type="term" value="C:nucleus"/>
    <property type="evidence" value="ECO:0000314"/>
    <property type="project" value="UniProtKB"/>
</dbReference>
<dbReference type="GO" id="GO:0003729">
    <property type="term" value="F:mRNA binding"/>
    <property type="evidence" value="ECO:0000314"/>
    <property type="project" value="UniProtKB"/>
</dbReference>
<dbReference type="GO" id="GO:0051028">
    <property type="term" value="P:mRNA transport"/>
    <property type="evidence" value="ECO:0000314"/>
    <property type="project" value="UniProtKB"/>
</dbReference>
<dbReference type="Gene3D" id="3.30.70.330">
    <property type="match status" value="2"/>
</dbReference>
<dbReference type="InterPro" id="IPR012677">
    <property type="entry name" value="Nucleotide-bd_a/b_plait_sf"/>
</dbReference>
<dbReference type="InterPro" id="IPR035979">
    <property type="entry name" value="RBD_domain_sf"/>
</dbReference>
<dbReference type="InterPro" id="IPR000504">
    <property type="entry name" value="RRM_dom"/>
</dbReference>
<dbReference type="PANTHER" id="PTHR10352">
    <property type="entry name" value="EUKARYOTIC TRANSLATION INITIATION FACTOR 3 SUBUNIT G"/>
    <property type="match status" value="1"/>
</dbReference>
<dbReference type="Pfam" id="PF00076">
    <property type="entry name" value="RRM_1"/>
    <property type="match status" value="2"/>
</dbReference>
<dbReference type="SMART" id="SM00360">
    <property type="entry name" value="RRM"/>
    <property type="match status" value="2"/>
</dbReference>
<dbReference type="SUPFAM" id="SSF54928">
    <property type="entry name" value="RNA-binding domain, RBD"/>
    <property type="match status" value="2"/>
</dbReference>
<dbReference type="PROSITE" id="PS50102">
    <property type="entry name" value="RRM"/>
    <property type="match status" value="2"/>
</dbReference>
<feature type="chain" id="PRO_0000451591" description="RNA-binding protein P">
    <location>
        <begin position="1"/>
        <end position="490"/>
    </location>
</feature>
<feature type="domain" description="RRM 1" evidence="1">
    <location>
        <begin position="156"/>
        <end position="233"/>
    </location>
</feature>
<feature type="domain" description="RRM 2" evidence="1">
    <location>
        <begin position="267"/>
        <end position="343"/>
    </location>
</feature>
<feature type="region of interest" description="Disordered" evidence="2">
    <location>
        <begin position="1"/>
        <end position="112"/>
    </location>
</feature>
<feature type="compositionally biased region" description="Low complexity" evidence="2">
    <location>
        <begin position="13"/>
        <end position="36"/>
    </location>
</feature>
<feature type="compositionally biased region" description="Acidic residues" evidence="2">
    <location>
        <begin position="74"/>
        <end position="108"/>
    </location>
</feature>
<feature type="mutagenesis site" description="In P3MH; reduces RNA binding activity." evidence="5">
    <original>A</original>
    <variation>T</variation>
    <location>
        <position position="252"/>
    </location>
</feature>
<feature type="mutagenesis site" description="In P2MH; growth defects, aberrant flower development leading to infertile panicles." evidence="5">
    <original>G</original>
    <variation>E</variation>
    <location>
        <position position="373"/>
    </location>
</feature>
<feature type="mutagenesis site" description="In P1MH; reduces RNA binding activity." evidence="5">
    <original>G</original>
    <variation>S</variation>
    <location>
        <position position="401"/>
    </location>
</feature>
<evidence type="ECO:0000255" key="1">
    <source>
        <dbReference type="PROSITE-ProRule" id="PRU00176"/>
    </source>
</evidence>
<evidence type="ECO:0000256" key="2">
    <source>
        <dbReference type="SAM" id="MobiDB-lite"/>
    </source>
</evidence>
<evidence type="ECO:0000269" key="3">
    <source>
    </source>
</evidence>
<evidence type="ECO:0000269" key="4">
    <source>
    </source>
</evidence>
<evidence type="ECO:0000269" key="5">
    <source>
    </source>
</evidence>
<evidence type="ECO:0000269" key="6">
    <source>
    </source>
</evidence>
<evidence type="ECO:0000303" key="7">
    <source>
    </source>
</evidence>
<evidence type="ECO:0000305" key="8"/>
<evidence type="ECO:0000312" key="9">
    <source>
        <dbReference type="EMBL" id="BAA90354.1"/>
    </source>
</evidence>
<evidence type="ECO:0000312" key="10">
    <source>
        <dbReference type="EMBL" id="BAS71462.1"/>
    </source>
</evidence>
<evidence type="ECO:0000312" key="11">
    <source>
        <dbReference type="EMBL" id="EAZ11348.1"/>
    </source>
</evidence>
<reference key="1">
    <citation type="journal article" date="2002" name="Nature">
        <title>The genome sequence and structure of rice chromosome 1.</title>
        <authorList>
            <person name="Sasaki T."/>
            <person name="Matsumoto T."/>
            <person name="Yamamoto K."/>
            <person name="Sakata K."/>
            <person name="Baba T."/>
            <person name="Katayose Y."/>
            <person name="Wu J."/>
            <person name="Niimura Y."/>
            <person name="Cheng Z."/>
            <person name="Nagamura Y."/>
            <person name="Antonio B.A."/>
            <person name="Kanamori H."/>
            <person name="Hosokawa S."/>
            <person name="Masukawa M."/>
            <person name="Arikawa K."/>
            <person name="Chiden Y."/>
            <person name="Hayashi M."/>
            <person name="Okamoto M."/>
            <person name="Ando T."/>
            <person name="Aoki H."/>
            <person name="Arita K."/>
            <person name="Hamada M."/>
            <person name="Harada C."/>
            <person name="Hijishita S."/>
            <person name="Honda M."/>
            <person name="Ichikawa Y."/>
            <person name="Idonuma A."/>
            <person name="Iijima M."/>
            <person name="Ikeda M."/>
            <person name="Ikeno M."/>
            <person name="Ito S."/>
            <person name="Ito T."/>
            <person name="Ito Y."/>
            <person name="Ito Y."/>
            <person name="Iwabuchi A."/>
            <person name="Kamiya K."/>
            <person name="Karasawa W."/>
            <person name="Katagiri S."/>
            <person name="Kikuta A."/>
            <person name="Kobayashi N."/>
            <person name="Kono I."/>
            <person name="Machita K."/>
            <person name="Maehara T."/>
            <person name="Mizuno H."/>
            <person name="Mizubayashi T."/>
            <person name="Mukai Y."/>
            <person name="Nagasaki H."/>
            <person name="Nakashima M."/>
            <person name="Nakama Y."/>
            <person name="Nakamichi Y."/>
            <person name="Nakamura M."/>
            <person name="Namiki N."/>
            <person name="Negishi M."/>
            <person name="Ohta I."/>
            <person name="Ono N."/>
            <person name="Saji S."/>
            <person name="Sakai K."/>
            <person name="Shibata M."/>
            <person name="Shimokawa T."/>
            <person name="Shomura A."/>
            <person name="Song J."/>
            <person name="Takazaki Y."/>
            <person name="Terasawa K."/>
            <person name="Tsuji K."/>
            <person name="Waki K."/>
            <person name="Yamagata H."/>
            <person name="Yamane H."/>
            <person name="Yoshiki S."/>
            <person name="Yoshihara R."/>
            <person name="Yukawa K."/>
            <person name="Zhong H."/>
            <person name="Iwama H."/>
            <person name="Endo T."/>
            <person name="Ito H."/>
            <person name="Hahn J.H."/>
            <person name="Kim H.-I."/>
            <person name="Eun M.-Y."/>
            <person name="Yano M."/>
            <person name="Jiang J."/>
            <person name="Gojobori T."/>
        </authorList>
    </citation>
    <scope>NUCLEOTIDE SEQUENCE [LARGE SCALE GENOMIC DNA]</scope>
    <source>
        <strain>cv. Nipponbare</strain>
    </source>
</reference>
<reference key="2">
    <citation type="journal article" date="2005" name="Nature">
        <title>The map-based sequence of the rice genome.</title>
        <authorList>
            <consortium name="International rice genome sequencing project (IRGSP)"/>
        </authorList>
    </citation>
    <scope>NUCLEOTIDE SEQUENCE [LARGE SCALE GENOMIC DNA]</scope>
    <source>
        <strain>cv. Nipponbare</strain>
    </source>
</reference>
<reference key="3">
    <citation type="journal article" date="2008" name="Nucleic Acids Res.">
        <title>The rice annotation project database (RAP-DB): 2008 update.</title>
        <authorList>
            <consortium name="The rice annotation project (RAP)"/>
        </authorList>
    </citation>
    <scope>GENOME REANNOTATION</scope>
    <source>
        <strain>cv. Nipponbare</strain>
    </source>
</reference>
<reference key="4">
    <citation type="journal article" date="2013" name="Rice">
        <title>Improvement of the Oryza sativa Nipponbare reference genome using next generation sequence and optical map data.</title>
        <authorList>
            <person name="Kawahara Y."/>
            <person name="de la Bastide M."/>
            <person name="Hamilton J.P."/>
            <person name="Kanamori H."/>
            <person name="McCombie W.R."/>
            <person name="Ouyang S."/>
            <person name="Schwartz D.C."/>
            <person name="Tanaka T."/>
            <person name="Wu J."/>
            <person name="Zhou S."/>
            <person name="Childs K.L."/>
            <person name="Davidson R.M."/>
            <person name="Lin H."/>
            <person name="Quesada-Ocampo L."/>
            <person name="Vaillancourt B."/>
            <person name="Sakai H."/>
            <person name="Lee S.S."/>
            <person name="Kim J."/>
            <person name="Numa H."/>
            <person name="Itoh T."/>
            <person name="Buell C.R."/>
            <person name="Matsumoto T."/>
        </authorList>
    </citation>
    <scope>GENOME REANNOTATION</scope>
    <source>
        <strain>cv. Nipponbare</strain>
    </source>
</reference>
<reference key="5">
    <citation type="journal article" date="2005" name="PLoS Biol.">
        <title>The genomes of Oryza sativa: a history of duplications.</title>
        <authorList>
            <person name="Yu J."/>
            <person name="Wang J."/>
            <person name="Lin W."/>
            <person name="Li S."/>
            <person name="Li H."/>
            <person name="Zhou J."/>
            <person name="Ni P."/>
            <person name="Dong W."/>
            <person name="Hu S."/>
            <person name="Zeng C."/>
            <person name="Zhang J."/>
            <person name="Zhang Y."/>
            <person name="Li R."/>
            <person name="Xu Z."/>
            <person name="Li S."/>
            <person name="Li X."/>
            <person name="Zheng H."/>
            <person name="Cong L."/>
            <person name="Lin L."/>
            <person name="Yin J."/>
            <person name="Geng J."/>
            <person name="Li G."/>
            <person name="Shi J."/>
            <person name="Liu J."/>
            <person name="Lv H."/>
            <person name="Li J."/>
            <person name="Wang J."/>
            <person name="Deng Y."/>
            <person name="Ran L."/>
            <person name="Shi X."/>
            <person name="Wang X."/>
            <person name="Wu Q."/>
            <person name="Li C."/>
            <person name="Ren X."/>
            <person name="Wang J."/>
            <person name="Wang X."/>
            <person name="Li D."/>
            <person name="Liu D."/>
            <person name="Zhang X."/>
            <person name="Ji Z."/>
            <person name="Zhao W."/>
            <person name="Sun Y."/>
            <person name="Zhang Z."/>
            <person name="Bao J."/>
            <person name="Han Y."/>
            <person name="Dong L."/>
            <person name="Ji J."/>
            <person name="Chen P."/>
            <person name="Wu S."/>
            <person name="Liu J."/>
            <person name="Xiao Y."/>
            <person name="Bu D."/>
            <person name="Tan J."/>
            <person name="Yang L."/>
            <person name="Ye C."/>
            <person name="Zhang J."/>
            <person name="Xu J."/>
            <person name="Zhou Y."/>
            <person name="Yu Y."/>
            <person name="Zhang B."/>
            <person name="Zhuang S."/>
            <person name="Wei H."/>
            <person name="Liu B."/>
            <person name="Lei M."/>
            <person name="Yu H."/>
            <person name="Li Y."/>
            <person name="Xu H."/>
            <person name="Wei S."/>
            <person name="He X."/>
            <person name="Fang L."/>
            <person name="Zhang Z."/>
            <person name="Zhang Y."/>
            <person name="Huang X."/>
            <person name="Su Z."/>
            <person name="Tong W."/>
            <person name="Li J."/>
            <person name="Tong Z."/>
            <person name="Li S."/>
            <person name="Ye J."/>
            <person name="Wang L."/>
            <person name="Fang L."/>
            <person name="Lei T."/>
            <person name="Chen C.-S."/>
            <person name="Chen H.-C."/>
            <person name="Xu Z."/>
            <person name="Li H."/>
            <person name="Huang H."/>
            <person name="Zhang F."/>
            <person name="Xu H."/>
            <person name="Li N."/>
            <person name="Zhao C."/>
            <person name="Li S."/>
            <person name="Dong L."/>
            <person name="Huang Y."/>
            <person name="Li L."/>
            <person name="Xi Y."/>
            <person name="Qi Q."/>
            <person name="Li W."/>
            <person name="Zhang B."/>
            <person name="Hu W."/>
            <person name="Zhang Y."/>
            <person name="Tian X."/>
            <person name="Jiao Y."/>
            <person name="Liang X."/>
            <person name="Jin J."/>
            <person name="Gao L."/>
            <person name="Zheng W."/>
            <person name="Hao B."/>
            <person name="Liu S.-M."/>
            <person name="Wang W."/>
            <person name="Yuan L."/>
            <person name="Cao M."/>
            <person name="McDermott J."/>
            <person name="Samudrala R."/>
            <person name="Wang J."/>
            <person name="Wong G.K.-S."/>
            <person name="Yang H."/>
        </authorList>
    </citation>
    <scope>NUCLEOTIDE SEQUENCE [LARGE SCALE GENOMIC DNA]</scope>
    <source>
        <strain>cv. Nipponbare</strain>
    </source>
</reference>
<reference key="6">
    <citation type="journal article" date="2003" name="Science">
        <title>Collection, mapping, and annotation of over 28,000 cDNA clones from japonica rice.</title>
        <authorList>
            <consortium name="The rice full-length cDNA consortium"/>
        </authorList>
    </citation>
    <scope>NUCLEOTIDE SEQUENCE [LARGE SCALE MRNA]</scope>
    <source>
        <strain>cv. Nipponbare</strain>
    </source>
</reference>
<reference key="7">
    <citation type="journal article" date="2010" name="Planta">
        <title>Isolation and identification of cytoskeleton-associated prolamine mRNA binding proteins from developing rice seeds.</title>
        <authorList>
            <person name="Crofts A.J."/>
            <person name="Crofts N."/>
            <person name="Whitelegge J.P."/>
            <person name="Okita T.W."/>
        </authorList>
    </citation>
    <scope>IDENTIFICATION BY MASS SPECTROMETRY</scope>
    <scope>FUNCTION</scope>
</reference>
<reference key="8">
    <citation type="journal article" date="2014" name="Plant Mol. Biol.">
        <title>Characterization of RNA binding protein RBP-P reveals a possible role in rice glutelin gene expression and RNA localization.</title>
        <authorList>
            <person name="Doroshenk K.A."/>
            <person name="Tian L."/>
            <person name="Crofts A.J."/>
            <person name="Kumamaru T."/>
            <person name="Okita T.W."/>
        </authorList>
    </citation>
    <scope>IDENTIFICATION BY MASS SPECTROMETRY</scope>
    <scope>FUNCTION</scope>
    <scope>SUBCELLULAR LOCATION</scope>
    <scope>DEVELOPMENTAL STAGE</scope>
</reference>
<reference key="9">
    <citation type="journal article" date="2018" name="Plant Cell">
        <title>RNA-binding protein RBP-P is required for glutelin and prolamine mRNA localization in rice endosperm cells.</title>
        <authorList>
            <person name="Tian L."/>
            <person name="Chou H.L."/>
            <person name="Zhang L."/>
            <person name="Hwang S.K."/>
            <person name="Starkenburg S.R."/>
            <person name="Doroshenk K.A."/>
            <person name="Kumamaru T."/>
            <person name="Okita T.W."/>
        </authorList>
    </citation>
    <scope>FUNCTION</scope>
    <scope>INTERACTION WITH RBP-L AND RBP-208</scope>
    <scope>SUBCELLULAR LOCATION</scope>
    <scope>MUTAGENESIS OF ALA-252; GLY-373 AND GLY-401</scope>
</reference>
<reference key="10">
    <citation type="journal article" date="2020" name="Plant Cell">
        <title>Zipcode RNA-binding proteins and membrane trafficking proteins cooperate to transport glutelin mRNAs in rice endosperm.</title>
        <authorList>
            <person name="Tian L."/>
            <person name="Doroshenk K.A."/>
            <person name="Zhang L."/>
            <person name="Fukuda M."/>
            <person name="Washida H."/>
            <person name="Kumamaru T."/>
            <person name="Okita T."/>
        </authorList>
    </citation>
    <scope>FUNCTION</scope>
    <scope>INTERACTION WITH NSF</scope>
</reference>
<proteinExistence type="evidence at protein level"/>
<name>RBPP_ORYSJ</name>
<sequence length="490" mass="49280">MGKKRKLDSKSPAAARSAAARAAAAAAAAAAAAAVAEPSSQPEALAEDPAPSSQPLGLSSEGAGERMMSREAGGGEEEEVEEVEVEEEVEVDEDEDGEGEGEEEEEAAERDADSIQALLNSFPKDQLVELLSAAALSHEDVLTAVHRAADADPALRKIFVHGLGWDATAETLTEAFSAYGEIEDLRVVTDRATGKCKGYGFILFSRRSGARAALREPQKKIGNRTTACQLASVGPVPPGGMATNPAPAVAPAPAQLALPPVSEYTQRKIFVSNVGADIDPQKLLQFFSKYGEIEEGPLGLDKVTGKPKGFALFVYKTLDSAKKALQEPHKQFEGVVLHCQKAIDGPKPNKGGGLGGLYGAGTSGGRKGAGGYGAHSHSLPGAAVGGHVMPSPVSSLTSLPGVAGGPGVNPALGQALTAILASQGGGLGLNNILGVGANGSGLPNPGASAGLGSSGLPGMPGAGGYLGGYGGGGGYGSTPPGGPGRNYMGH</sequence>
<protein>
    <recommendedName>
        <fullName evidence="7">RNA-binding protein P</fullName>
    </recommendedName>
</protein>
<organism>
    <name type="scientific">Oryza sativa subsp. japonica</name>
    <name type="common">Rice</name>
    <dbReference type="NCBI Taxonomy" id="39947"/>
    <lineage>
        <taxon>Eukaryota</taxon>
        <taxon>Viridiplantae</taxon>
        <taxon>Streptophyta</taxon>
        <taxon>Embryophyta</taxon>
        <taxon>Tracheophyta</taxon>
        <taxon>Spermatophyta</taxon>
        <taxon>Magnoliopsida</taxon>
        <taxon>Liliopsida</taxon>
        <taxon>Poales</taxon>
        <taxon>Poaceae</taxon>
        <taxon>BOP clade</taxon>
        <taxon>Oryzoideae</taxon>
        <taxon>Oryzeae</taxon>
        <taxon>Oryzinae</taxon>
        <taxon>Oryza</taxon>
        <taxon>Oryza sativa</taxon>
    </lineage>
</organism>
<comment type="function">
    <text evidence="3 4 5 6">RNA-binding protein that binds to a cis-localization element or zipcode, within the 5'-CDS of prolamine RNA (PubMed:20217123, PubMed:24682961). Binds strongly to glutelin mRNA, particularly to 3'-UTR and zipcode RNA (PubMed:24682961). Recognizes and binds to glutelin zipcode RNA, which is required for proper mRNA localization to cisternal endoplasmic reticulum (PubMed:24682961). Exhibits strong binding activity to a glutelin intron sequence and may participate in mRNA splicing (PubMed:24682961). Required for the correct localization of glutelin and prolamine mRNA in endosperm cells during grain development (PubMed:30190374). RBP-P and RBP-L form a quaternary complex with the membrane trafficking factors NSF and RAB5A (PubMed:32471860). This quaternay complex carries glutelin mRNAs for active transport on endosomes to the cortical endoplasmic reticulum membrane, and enables endosome-mediated glutelin mRNA transport in endosperm cells (PubMed:32471860).</text>
</comment>
<comment type="subunit">
    <text evidence="5 6">Forms homodimers (PubMed:30190374). Interacts with RBP-L and RBP-208 (PubMed:30190374). Interacts with NSF (PubMed:32471860).</text>
</comment>
<comment type="subcellular location">
    <subcellularLocation>
        <location evidence="4 5">Nucleus</location>
    </subcellularLocation>
    <subcellularLocation>
        <location evidence="4 5">Cytoplasm</location>
    </subcellularLocation>
</comment>
<comment type="developmental stage">
    <text evidence="4">During flowering and seed development, expressed very weakly at 3 days after flowering (DAF) (at protein level) (PubMed:24682961). Expression increases until 9 DAF and remains relatively steady until a sharp decline 23 DAF (at protein level) (PubMed:24682961).</text>
</comment>
<comment type="sequence caution" evidence="8">
    <conflict type="erroneous initiation">
        <sequence resource="EMBL-CDS" id="BAF04586"/>
    </conflict>
    <text>Extended N-terminus.</text>
</comment>
<gene>
    <name evidence="7" type="primary">RBP-P</name>
    <name evidence="10" type="ordered locus">Os01g0265800</name>
    <name evidence="8" type="ordered locus">LOC_Os01g16090</name>
    <name evidence="11" type="ORF">OsJ_01215</name>
    <name evidence="9" type="ORF">P0499C11.21</name>
</gene>